<proteinExistence type="evidence at transcript level"/>
<feature type="chain" id="PRO_0000427449" description="Uncharacterized protein MT2060">
    <location>
        <begin position="1"/>
        <end position="498"/>
    </location>
</feature>
<feature type="binding site" evidence="2">
    <location>
        <begin position="329"/>
        <end position="336"/>
    </location>
    <ligand>
        <name>ATP</name>
        <dbReference type="ChEBI" id="CHEBI:30616"/>
    </ligand>
</feature>
<organism>
    <name type="scientific">Mycobacterium tuberculosis (strain CDC 1551 / Oshkosh)</name>
    <dbReference type="NCBI Taxonomy" id="83331"/>
    <lineage>
        <taxon>Bacteria</taxon>
        <taxon>Bacillati</taxon>
        <taxon>Actinomycetota</taxon>
        <taxon>Actinomycetes</taxon>
        <taxon>Mycobacteriales</taxon>
        <taxon>Mycobacteriaceae</taxon>
        <taxon>Mycobacterium</taxon>
        <taxon>Mycobacterium tuberculosis complex</taxon>
    </lineage>
</organism>
<dbReference type="EMBL" id="AE000516">
    <property type="protein sequence ID" value="AAK46337.1"/>
    <property type="status" value="ALT_INIT"/>
    <property type="molecule type" value="Genomic_DNA"/>
</dbReference>
<dbReference type="PIR" id="B70759">
    <property type="entry name" value="B70759"/>
</dbReference>
<dbReference type="RefSeq" id="WP_003410057.1">
    <property type="nucleotide sequence ID" value="NZ_KK341227.1"/>
</dbReference>
<dbReference type="KEGG" id="mtc:MT2060"/>
<dbReference type="PATRIC" id="fig|83331.31.peg.2218"/>
<dbReference type="HOGENOM" id="CLU_026771_1_1_11"/>
<dbReference type="Proteomes" id="UP000001020">
    <property type="component" value="Chromosome"/>
</dbReference>
<dbReference type="GO" id="GO:0005576">
    <property type="term" value="C:extracellular region"/>
    <property type="evidence" value="ECO:0007669"/>
    <property type="project" value="UniProtKB-KW"/>
</dbReference>
<dbReference type="GO" id="GO:0005524">
    <property type="term" value="F:ATP binding"/>
    <property type="evidence" value="ECO:0007669"/>
    <property type="project" value="UniProtKB-KW"/>
</dbReference>
<dbReference type="Gene3D" id="3.40.50.300">
    <property type="entry name" value="P-loop containing nucleotide triphosphate hydrolases"/>
    <property type="match status" value="1"/>
</dbReference>
<dbReference type="InterPro" id="IPR052732">
    <property type="entry name" value="Cell-binding_unc_protein"/>
</dbReference>
<dbReference type="InterPro" id="IPR011009">
    <property type="entry name" value="Kinase-like_dom_sf"/>
</dbReference>
<dbReference type="InterPro" id="IPR027417">
    <property type="entry name" value="P-loop_NTPase"/>
</dbReference>
<dbReference type="PANTHER" id="PTHR43883:SF1">
    <property type="entry name" value="GLUCONOKINASE"/>
    <property type="match status" value="1"/>
</dbReference>
<dbReference type="PANTHER" id="PTHR43883">
    <property type="entry name" value="SLR0207 PROTEIN"/>
    <property type="match status" value="1"/>
</dbReference>
<dbReference type="Pfam" id="PF13671">
    <property type="entry name" value="AAA_33"/>
    <property type="match status" value="1"/>
</dbReference>
<dbReference type="SUPFAM" id="SSF52540">
    <property type="entry name" value="P-loop containing nucleoside triphosphate hydrolases"/>
    <property type="match status" value="1"/>
</dbReference>
<dbReference type="SUPFAM" id="SSF56112">
    <property type="entry name" value="Protein kinase-like (PK-like)"/>
    <property type="match status" value="1"/>
</dbReference>
<protein>
    <recommendedName>
        <fullName>Uncharacterized protein MT2060</fullName>
    </recommendedName>
</protein>
<reference key="1">
    <citation type="journal article" date="2002" name="J. Bacteriol.">
        <title>Whole-genome comparison of Mycobacterium tuberculosis clinical and laboratory strains.</title>
        <authorList>
            <person name="Fleischmann R.D."/>
            <person name="Alland D."/>
            <person name="Eisen J.A."/>
            <person name="Carpenter L."/>
            <person name="White O."/>
            <person name="Peterson J.D."/>
            <person name="DeBoy R.T."/>
            <person name="Dodson R.J."/>
            <person name="Gwinn M.L."/>
            <person name="Haft D.H."/>
            <person name="Hickey E.K."/>
            <person name="Kolonay J.F."/>
            <person name="Nelson W.C."/>
            <person name="Umayam L.A."/>
            <person name="Ermolaeva M.D."/>
            <person name="Salzberg S.L."/>
            <person name="Delcher A."/>
            <person name="Utterback T.R."/>
            <person name="Weidman J.F."/>
            <person name="Khouri H.M."/>
            <person name="Gill J."/>
            <person name="Mikula A."/>
            <person name="Bishai W."/>
            <person name="Jacobs W.R. Jr."/>
            <person name="Venter J.C."/>
            <person name="Fraser C.M."/>
        </authorList>
    </citation>
    <scope>NUCLEOTIDE SEQUENCE [LARGE SCALE GENOMIC DNA]</scope>
    <source>
        <strain>CDC 1551 / Oshkosh</strain>
    </source>
</reference>
<reference key="2">
    <citation type="journal article" date="2003" name="J. Exp. Med.">
        <title>Inhibition of respiration by nitric oxide induces a Mycobacterium tuberculosis dormancy program.</title>
        <authorList>
            <person name="Voskuil M.I."/>
            <person name="Schnappinger D."/>
            <person name="Visconti K.C."/>
            <person name="Harrell M.I."/>
            <person name="Dolganov G.M."/>
            <person name="Sherman D.R."/>
            <person name="Schoolnik G.K."/>
        </authorList>
    </citation>
    <scope>INDUCTION BY NITRIC OXIDE (NO) AND BY HYPOXIA</scope>
    <scope>DORMANCY REGULON</scope>
    <source>
        <strain>CDC 1551 / Oshkosh</strain>
    </source>
</reference>
<keyword id="KW-0067">ATP-binding</keyword>
<keyword id="KW-0134">Cell wall</keyword>
<keyword id="KW-0547">Nucleotide-binding</keyword>
<keyword id="KW-1185">Reference proteome</keyword>
<keyword id="KW-0964">Secreted</keyword>
<accession>P9WLN2</accession>
<accession>L0T9W8</accession>
<accession>P0A5F9</accession>
<accession>Q10852</accession>
<sequence length="498" mass="54423">MDSPTNDGTCDAHPVTDEPFIDVRETHTAVVVLAGDRAFKAKKPVVTDFCDFRTAEQRERACIREFELNSRLAAQSYLGIAHLSDPSGGHAEPVVVMRRYRDKQRLASMVTAGLPVEGALDAIAEVLARFHQRAQRNRCIDTQGEVGAVARRWHENLAELRHHADKVVSGDVIRRIEHMVDEFVSGREVLFAGRIKEGCIVDGHADLLADDIFLVDGEPALLDCLEFEDELRYLDRIDDAAFLAMDLEFLGRKDLGDYFLAGYAVRSGDTAPASLRDFYIAYRAVVRAKVECVRFSQGKPEAAADAVRHLIIATQHLQHATVRLALVGGNPGTGKSTLARGVAELVGAQVISTDDVRRRLRDCGVITGEPGVLDSGLYSRANVVAVYQEALRKARLLLGSGHSVILDGTWGDPQMRACARRLAADTHSAIVEFRCSATVDVMADRIVARAGGNSDATAEIAAALAARQADWDTGHRIDTAGPRERSVGQAYHIWRSAI</sequence>
<comment type="subcellular location">
    <subcellularLocation>
        <location evidence="1">Secreted</location>
        <location evidence="1">Cell wall</location>
    </subcellularLocation>
</comment>
<comment type="induction">
    <text evidence="3">A member of the dormancy regulon. Induced in response to reduced oxygen tension (hypoxia) and low levels of nitric oxide (NO).</text>
</comment>
<comment type="sequence caution" evidence="4">
    <conflict type="erroneous initiation">
        <sequence resource="EMBL-CDS" id="AAK46337"/>
    </conflict>
</comment>
<evidence type="ECO:0000250" key="1"/>
<evidence type="ECO:0000255" key="2"/>
<evidence type="ECO:0000269" key="3">
    <source>
    </source>
</evidence>
<evidence type="ECO:0000305" key="4"/>
<gene>
    <name type="ordered locus">MT2060</name>
</gene>
<name>Y2004_MYCTO</name>